<organism>
    <name type="scientific">Novosphingobium aromaticivorans (strain ATCC 700278 / DSM 12444 / CCUG 56034 / CIP 105152 / NBRC 16084 / F199)</name>
    <dbReference type="NCBI Taxonomy" id="279238"/>
    <lineage>
        <taxon>Bacteria</taxon>
        <taxon>Pseudomonadati</taxon>
        <taxon>Pseudomonadota</taxon>
        <taxon>Alphaproteobacteria</taxon>
        <taxon>Sphingomonadales</taxon>
        <taxon>Sphingomonadaceae</taxon>
        <taxon>Novosphingobium</taxon>
    </lineage>
</organism>
<accession>Q2G669</accession>
<sequence length="139" mass="14720">MAKFLIVEARFYDHLNDMLVAGAKAALKEAGHEVEVITVPGALEIPGAIALADQSEDYDGYVAIGVVIRGETYHFEIVAGESARGIMALTMDGVAIGNGILTVENEAQALVRADPKQKDKGGEAAKAALALLALRERWS</sequence>
<protein>
    <recommendedName>
        <fullName evidence="1">6,7-dimethyl-8-ribityllumazine synthase</fullName>
        <shortName evidence="1">DMRL synthase</shortName>
        <shortName evidence="1">LS</shortName>
        <shortName evidence="1">Lumazine synthase</shortName>
        <ecNumber evidence="1">2.5.1.78</ecNumber>
    </recommendedName>
</protein>
<name>RISB_NOVAD</name>
<evidence type="ECO:0000255" key="1">
    <source>
        <dbReference type="HAMAP-Rule" id="MF_00178"/>
    </source>
</evidence>
<gene>
    <name evidence="1" type="primary">ribH</name>
    <name type="ordered locus">Saro_2216</name>
</gene>
<reference key="1">
    <citation type="submission" date="2006-01" db="EMBL/GenBank/DDBJ databases">
        <title>Complete sequence of Novosphingobium aromaticivorans DSM 12444.</title>
        <authorList>
            <consortium name="US DOE Joint Genome Institute"/>
            <person name="Copeland A."/>
            <person name="Lucas S."/>
            <person name="Lapidus A."/>
            <person name="Barry K."/>
            <person name="Detter J.C."/>
            <person name="Glavina T."/>
            <person name="Hammon N."/>
            <person name="Israni S."/>
            <person name="Pitluck S."/>
            <person name="Chain P."/>
            <person name="Malfatti S."/>
            <person name="Shin M."/>
            <person name="Vergez L."/>
            <person name="Schmutz J."/>
            <person name="Larimer F."/>
            <person name="Land M."/>
            <person name="Kyrpides N."/>
            <person name="Ivanova N."/>
            <person name="Fredrickson J."/>
            <person name="Balkwill D."/>
            <person name="Romine M.F."/>
            <person name="Richardson P."/>
        </authorList>
    </citation>
    <scope>NUCLEOTIDE SEQUENCE [LARGE SCALE GENOMIC DNA]</scope>
    <source>
        <strain>ATCC 700278 / DSM 12444 / CCUG 56034 / CIP 105152 / NBRC 16084 / F199</strain>
    </source>
</reference>
<dbReference type="EC" id="2.5.1.78" evidence="1"/>
<dbReference type="EMBL" id="CP000248">
    <property type="protein sequence ID" value="ABD26654.1"/>
    <property type="molecule type" value="Genomic_DNA"/>
</dbReference>
<dbReference type="RefSeq" id="WP_011445860.1">
    <property type="nucleotide sequence ID" value="NC_007794.1"/>
</dbReference>
<dbReference type="SMR" id="Q2G669"/>
<dbReference type="STRING" id="279238.Saro_2216"/>
<dbReference type="KEGG" id="nar:Saro_2216"/>
<dbReference type="eggNOG" id="COG0054">
    <property type="taxonomic scope" value="Bacteria"/>
</dbReference>
<dbReference type="HOGENOM" id="CLU_089358_1_2_5"/>
<dbReference type="UniPathway" id="UPA00275">
    <property type="reaction ID" value="UER00404"/>
</dbReference>
<dbReference type="Proteomes" id="UP000009134">
    <property type="component" value="Chromosome"/>
</dbReference>
<dbReference type="GO" id="GO:0005829">
    <property type="term" value="C:cytosol"/>
    <property type="evidence" value="ECO:0007669"/>
    <property type="project" value="TreeGrafter"/>
</dbReference>
<dbReference type="GO" id="GO:0009349">
    <property type="term" value="C:riboflavin synthase complex"/>
    <property type="evidence" value="ECO:0007669"/>
    <property type="project" value="InterPro"/>
</dbReference>
<dbReference type="GO" id="GO:0000906">
    <property type="term" value="F:6,7-dimethyl-8-ribityllumazine synthase activity"/>
    <property type="evidence" value="ECO:0007669"/>
    <property type="project" value="UniProtKB-UniRule"/>
</dbReference>
<dbReference type="GO" id="GO:0009231">
    <property type="term" value="P:riboflavin biosynthetic process"/>
    <property type="evidence" value="ECO:0007669"/>
    <property type="project" value="UniProtKB-UniRule"/>
</dbReference>
<dbReference type="CDD" id="cd09209">
    <property type="entry name" value="Lumazine_synthase-I"/>
    <property type="match status" value="1"/>
</dbReference>
<dbReference type="Gene3D" id="3.40.50.960">
    <property type="entry name" value="Lumazine/riboflavin synthase"/>
    <property type="match status" value="1"/>
</dbReference>
<dbReference type="HAMAP" id="MF_00178">
    <property type="entry name" value="Lumazine_synth"/>
    <property type="match status" value="1"/>
</dbReference>
<dbReference type="InterPro" id="IPR034964">
    <property type="entry name" value="LS"/>
</dbReference>
<dbReference type="InterPro" id="IPR002180">
    <property type="entry name" value="LS/RS"/>
</dbReference>
<dbReference type="InterPro" id="IPR036467">
    <property type="entry name" value="LS/RS_sf"/>
</dbReference>
<dbReference type="NCBIfam" id="TIGR00114">
    <property type="entry name" value="lumazine-synth"/>
    <property type="match status" value="1"/>
</dbReference>
<dbReference type="PANTHER" id="PTHR21058:SF0">
    <property type="entry name" value="6,7-DIMETHYL-8-RIBITYLLUMAZINE SYNTHASE"/>
    <property type="match status" value="1"/>
</dbReference>
<dbReference type="PANTHER" id="PTHR21058">
    <property type="entry name" value="6,7-DIMETHYL-8-RIBITYLLUMAZINE SYNTHASE DMRL SYNTHASE LUMAZINE SYNTHASE"/>
    <property type="match status" value="1"/>
</dbReference>
<dbReference type="Pfam" id="PF00885">
    <property type="entry name" value="DMRL_synthase"/>
    <property type="match status" value="1"/>
</dbReference>
<dbReference type="SUPFAM" id="SSF52121">
    <property type="entry name" value="Lumazine synthase"/>
    <property type="match status" value="1"/>
</dbReference>
<proteinExistence type="inferred from homology"/>
<comment type="function">
    <text evidence="1">Catalyzes the formation of 6,7-dimethyl-8-ribityllumazine by condensation of 5-amino-6-(D-ribitylamino)uracil with 3,4-dihydroxy-2-butanone 4-phosphate. This is the penultimate step in the biosynthesis of riboflavin.</text>
</comment>
<comment type="catalytic activity">
    <reaction evidence="1">
        <text>(2S)-2-hydroxy-3-oxobutyl phosphate + 5-amino-6-(D-ribitylamino)uracil = 6,7-dimethyl-8-(1-D-ribityl)lumazine + phosphate + 2 H2O + H(+)</text>
        <dbReference type="Rhea" id="RHEA:26152"/>
        <dbReference type="ChEBI" id="CHEBI:15377"/>
        <dbReference type="ChEBI" id="CHEBI:15378"/>
        <dbReference type="ChEBI" id="CHEBI:15934"/>
        <dbReference type="ChEBI" id="CHEBI:43474"/>
        <dbReference type="ChEBI" id="CHEBI:58201"/>
        <dbReference type="ChEBI" id="CHEBI:58830"/>
        <dbReference type="EC" id="2.5.1.78"/>
    </reaction>
</comment>
<comment type="pathway">
    <text evidence="1">Cofactor biosynthesis; riboflavin biosynthesis; riboflavin from 2-hydroxy-3-oxobutyl phosphate and 5-amino-6-(D-ribitylamino)uracil: step 1/2.</text>
</comment>
<comment type="similarity">
    <text evidence="1">Belongs to the DMRL synthase family.</text>
</comment>
<feature type="chain" id="PRO_1000098211" description="6,7-dimethyl-8-ribityllumazine synthase">
    <location>
        <begin position="1"/>
        <end position="139"/>
    </location>
</feature>
<feature type="active site" description="Proton donor" evidence="1">
    <location>
        <position position="74"/>
    </location>
</feature>
<feature type="binding site" evidence="1">
    <location>
        <position position="11"/>
    </location>
    <ligand>
        <name>5-amino-6-(D-ribitylamino)uracil</name>
        <dbReference type="ChEBI" id="CHEBI:15934"/>
    </ligand>
</feature>
<feature type="binding site" evidence="1">
    <location>
        <begin position="42"/>
        <end position="44"/>
    </location>
    <ligand>
        <name>5-amino-6-(D-ribitylamino)uracil</name>
        <dbReference type="ChEBI" id="CHEBI:15934"/>
    </ligand>
</feature>
<feature type="binding site" evidence="1">
    <location>
        <begin position="66"/>
        <end position="68"/>
    </location>
    <ligand>
        <name>5-amino-6-(D-ribitylamino)uracil</name>
        <dbReference type="ChEBI" id="CHEBI:15934"/>
    </ligand>
</feature>
<feature type="binding site" evidence="1">
    <location>
        <begin position="71"/>
        <end position="72"/>
    </location>
    <ligand>
        <name>(2S)-2-hydroxy-3-oxobutyl phosphate</name>
        <dbReference type="ChEBI" id="CHEBI:58830"/>
    </ligand>
</feature>
<feature type="binding site" evidence="1">
    <location>
        <position position="98"/>
    </location>
    <ligand>
        <name>5-amino-6-(D-ribitylamino)uracil</name>
        <dbReference type="ChEBI" id="CHEBI:15934"/>
    </ligand>
</feature>
<feature type="binding site" evidence="1">
    <location>
        <position position="112"/>
    </location>
    <ligand>
        <name>(2S)-2-hydroxy-3-oxobutyl phosphate</name>
        <dbReference type="ChEBI" id="CHEBI:58830"/>
    </ligand>
</feature>
<keyword id="KW-1185">Reference proteome</keyword>
<keyword id="KW-0686">Riboflavin biosynthesis</keyword>
<keyword id="KW-0808">Transferase</keyword>